<protein>
    <recommendedName>
        <fullName evidence="1">Small ribosomal subunit biogenesis GTPase RsgA</fullName>
        <ecNumber evidence="1">3.6.1.-</ecNumber>
    </recommendedName>
</protein>
<dbReference type="EC" id="3.6.1.-" evidence="1"/>
<dbReference type="EMBL" id="CP002038">
    <property type="protein sequence ID" value="ADN00232.1"/>
    <property type="molecule type" value="Genomic_DNA"/>
</dbReference>
<dbReference type="EMBL" id="AJ251781">
    <property type="protein sequence ID" value="CAC18670.1"/>
    <property type="molecule type" value="Genomic_DNA"/>
</dbReference>
<dbReference type="RefSeq" id="WP_013319650.1">
    <property type="nucleotide sequence ID" value="NC_014500.1"/>
</dbReference>
<dbReference type="SMR" id="Q9EV05"/>
<dbReference type="STRING" id="198628.Dda3937_02151"/>
<dbReference type="GeneID" id="55490708"/>
<dbReference type="KEGG" id="ddd:Dda3937_02151"/>
<dbReference type="PATRIC" id="fig|198628.6.peg.3972"/>
<dbReference type="eggNOG" id="COG1162">
    <property type="taxonomic scope" value="Bacteria"/>
</dbReference>
<dbReference type="HOGENOM" id="CLU_033617_2_0_6"/>
<dbReference type="OrthoDB" id="9809485at2"/>
<dbReference type="Proteomes" id="UP000006859">
    <property type="component" value="Chromosome"/>
</dbReference>
<dbReference type="GO" id="GO:0005737">
    <property type="term" value="C:cytoplasm"/>
    <property type="evidence" value="ECO:0007669"/>
    <property type="project" value="UniProtKB-SubCell"/>
</dbReference>
<dbReference type="GO" id="GO:0005525">
    <property type="term" value="F:GTP binding"/>
    <property type="evidence" value="ECO:0007669"/>
    <property type="project" value="UniProtKB-UniRule"/>
</dbReference>
<dbReference type="GO" id="GO:0003924">
    <property type="term" value="F:GTPase activity"/>
    <property type="evidence" value="ECO:0007669"/>
    <property type="project" value="UniProtKB-UniRule"/>
</dbReference>
<dbReference type="GO" id="GO:0046872">
    <property type="term" value="F:metal ion binding"/>
    <property type="evidence" value="ECO:0007669"/>
    <property type="project" value="UniProtKB-KW"/>
</dbReference>
<dbReference type="GO" id="GO:0019843">
    <property type="term" value="F:rRNA binding"/>
    <property type="evidence" value="ECO:0007669"/>
    <property type="project" value="UniProtKB-KW"/>
</dbReference>
<dbReference type="GO" id="GO:0042274">
    <property type="term" value="P:ribosomal small subunit biogenesis"/>
    <property type="evidence" value="ECO:0007669"/>
    <property type="project" value="UniProtKB-UniRule"/>
</dbReference>
<dbReference type="CDD" id="cd01854">
    <property type="entry name" value="YjeQ_EngC"/>
    <property type="match status" value="1"/>
</dbReference>
<dbReference type="Gene3D" id="2.40.50.140">
    <property type="entry name" value="Nucleic acid-binding proteins"/>
    <property type="match status" value="1"/>
</dbReference>
<dbReference type="Gene3D" id="3.40.50.300">
    <property type="entry name" value="P-loop containing nucleotide triphosphate hydrolases"/>
    <property type="match status" value="1"/>
</dbReference>
<dbReference type="Gene3D" id="1.10.40.50">
    <property type="entry name" value="Probable gtpase engc, domain 3"/>
    <property type="match status" value="1"/>
</dbReference>
<dbReference type="HAMAP" id="MF_01820">
    <property type="entry name" value="GTPase_RsgA"/>
    <property type="match status" value="1"/>
</dbReference>
<dbReference type="InterPro" id="IPR030378">
    <property type="entry name" value="G_CP_dom"/>
</dbReference>
<dbReference type="InterPro" id="IPR012340">
    <property type="entry name" value="NA-bd_OB-fold"/>
</dbReference>
<dbReference type="InterPro" id="IPR027417">
    <property type="entry name" value="P-loop_NTPase"/>
</dbReference>
<dbReference type="InterPro" id="IPR004881">
    <property type="entry name" value="Ribosome_biogen_GTPase_RsgA"/>
</dbReference>
<dbReference type="InterPro" id="IPR010914">
    <property type="entry name" value="RsgA_GTPase_dom"/>
</dbReference>
<dbReference type="NCBIfam" id="NF008931">
    <property type="entry name" value="PRK12288.1"/>
    <property type="match status" value="1"/>
</dbReference>
<dbReference type="NCBIfam" id="TIGR00157">
    <property type="entry name" value="ribosome small subunit-dependent GTPase A"/>
    <property type="match status" value="1"/>
</dbReference>
<dbReference type="PANTHER" id="PTHR32120">
    <property type="entry name" value="SMALL RIBOSOMAL SUBUNIT BIOGENESIS GTPASE RSGA"/>
    <property type="match status" value="1"/>
</dbReference>
<dbReference type="PANTHER" id="PTHR32120:SF11">
    <property type="entry name" value="SMALL RIBOSOMAL SUBUNIT BIOGENESIS GTPASE RSGA 1, MITOCHONDRIAL-RELATED"/>
    <property type="match status" value="1"/>
</dbReference>
<dbReference type="Pfam" id="PF03193">
    <property type="entry name" value="RsgA_GTPase"/>
    <property type="match status" value="1"/>
</dbReference>
<dbReference type="SUPFAM" id="SSF52540">
    <property type="entry name" value="P-loop containing nucleoside triphosphate hydrolases"/>
    <property type="match status" value="1"/>
</dbReference>
<dbReference type="PROSITE" id="PS50936">
    <property type="entry name" value="ENGC_GTPASE"/>
    <property type="match status" value="1"/>
</dbReference>
<dbReference type="PROSITE" id="PS51721">
    <property type="entry name" value="G_CP"/>
    <property type="match status" value="1"/>
</dbReference>
<comment type="function">
    <text evidence="1">One of several proteins that assist in the late maturation steps of the functional core of the 30S ribosomal subunit. Helps release RbfA from mature subunits. May play a role in the assembly of ribosomal proteins into the subunit. Circularly permuted GTPase that catalyzes slow GTP hydrolysis, GTPase activity is stimulated by the 30S ribosomal subunit.</text>
</comment>
<comment type="cofactor">
    <cofactor evidence="1">
        <name>Zn(2+)</name>
        <dbReference type="ChEBI" id="CHEBI:29105"/>
    </cofactor>
    <text evidence="1">Binds 1 zinc ion per subunit.</text>
</comment>
<comment type="subunit">
    <text evidence="1">Monomer. Associates with 30S ribosomal subunit, binds 16S rRNA.</text>
</comment>
<comment type="subcellular location">
    <subcellularLocation>
        <location evidence="1">Cytoplasm</location>
    </subcellularLocation>
</comment>
<comment type="similarity">
    <text evidence="1">Belongs to the TRAFAC class YlqF/YawG GTPase family. RsgA subfamily.</text>
</comment>
<proteinExistence type="inferred from homology"/>
<sequence length="349" mass="38943">MSKKKLSKGQQRRVSANHQRRLKHADSKVEWDDSQLSEPQEGVIISRFGMHADVEAPDGKLHRCNIRRTIHSLVTGDRVVWRAGNETLAGISGIVEAVHPRQSVLTRPDYYDGLKPIAANIDQIVIVSAILPELSLNIIDRYLVACETLEIEPLIVLNKIDLLDDEGRAFVEEVMDIYRALHYRVLMMSSHTQQGVAELEAALTGRVSIFAGQSGVGKSSLLNALLYPDDAQILVNDVSDASGLGQHTTTAARLYHFPHGGDVIDSPGVREFGLWHLEPEQVTRGFIEFRDYLGSCKFRDCKHDTDPGCAIRAALERGEIAPERFDNYHRILESMAQVKTRKSFSAPDN</sequence>
<name>RSGA_DICD3</name>
<feature type="chain" id="PRO_0000171476" description="Small ribosomal subunit biogenesis GTPase RsgA">
    <location>
        <begin position="1"/>
        <end position="349"/>
    </location>
</feature>
<feature type="domain" description="CP-type G" evidence="2">
    <location>
        <begin position="111"/>
        <end position="272"/>
    </location>
</feature>
<feature type="region of interest" description="Disordered" evidence="3">
    <location>
        <begin position="1"/>
        <end position="35"/>
    </location>
</feature>
<feature type="compositionally biased region" description="Basic residues" evidence="3">
    <location>
        <begin position="1"/>
        <end position="11"/>
    </location>
</feature>
<feature type="binding site" evidence="1">
    <location>
        <begin position="158"/>
        <end position="161"/>
    </location>
    <ligand>
        <name>GTP</name>
        <dbReference type="ChEBI" id="CHEBI:37565"/>
    </ligand>
</feature>
<feature type="binding site" evidence="1">
    <location>
        <begin position="212"/>
        <end position="220"/>
    </location>
    <ligand>
        <name>GTP</name>
        <dbReference type="ChEBI" id="CHEBI:37565"/>
    </ligand>
</feature>
<feature type="binding site" evidence="1">
    <location>
        <position position="296"/>
    </location>
    <ligand>
        <name>Zn(2+)</name>
        <dbReference type="ChEBI" id="CHEBI:29105"/>
    </ligand>
</feature>
<feature type="binding site" evidence="1">
    <location>
        <position position="301"/>
    </location>
    <ligand>
        <name>Zn(2+)</name>
        <dbReference type="ChEBI" id="CHEBI:29105"/>
    </ligand>
</feature>
<feature type="binding site" evidence="1">
    <location>
        <position position="303"/>
    </location>
    <ligand>
        <name>Zn(2+)</name>
        <dbReference type="ChEBI" id="CHEBI:29105"/>
    </ligand>
</feature>
<feature type="binding site" evidence="1">
    <location>
        <position position="309"/>
    </location>
    <ligand>
        <name>Zn(2+)</name>
        <dbReference type="ChEBI" id="CHEBI:29105"/>
    </ligand>
</feature>
<feature type="sequence conflict" description="In Ref. 2; CAC18670." evidence="4" ref="2">
    <original>RA</original>
    <variation>AP</variation>
    <location>
        <begin position="82"/>
        <end position="83"/>
    </location>
</feature>
<feature type="sequence conflict" description="In Ref. 2; CAC18670." evidence="4" ref="2">
    <original>ISGIVEA</original>
    <variation>HQRHRRKR</variation>
    <location>
        <begin position="91"/>
        <end position="97"/>
    </location>
</feature>
<feature type="sequence conflict" description="In Ref. 2; CAC18670." evidence="4" ref="2">
    <original>L</original>
    <variation>F</variation>
    <location>
        <position position="114"/>
    </location>
</feature>
<feature type="sequence conflict" description="In Ref. 2; CAC18670." evidence="4" ref="2">
    <location>
        <begin position="298"/>
        <end position="299"/>
    </location>
</feature>
<gene>
    <name evidence="1" type="primary">rsgA</name>
    <name type="ordered locus">Dda3937_02151</name>
</gene>
<reference key="1">
    <citation type="journal article" date="2011" name="J. Bacteriol.">
        <title>Genome sequence of the plant-pathogenic bacterium Dickeya dadantii 3937.</title>
        <authorList>
            <person name="Glasner J.D."/>
            <person name="Yang C.H."/>
            <person name="Reverchon S."/>
            <person name="Hugouvieux-Cotte-Pattat N."/>
            <person name="Condemine G."/>
            <person name="Bohin J.P."/>
            <person name="Van Gijsegem F."/>
            <person name="Yang S."/>
            <person name="Franza T."/>
            <person name="Expert D."/>
            <person name="Plunkett G. III"/>
            <person name="San Francisco M.J."/>
            <person name="Charkowski A.O."/>
            <person name="Py B."/>
            <person name="Bell K."/>
            <person name="Rauscher L."/>
            <person name="Rodriguez-Palenzuela P."/>
            <person name="Toussaint A."/>
            <person name="Holeva M.C."/>
            <person name="He S.Y."/>
            <person name="Douet V."/>
            <person name="Boccara M."/>
            <person name="Blanco C."/>
            <person name="Toth I."/>
            <person name="Anderson B.D."/>
            <person name="Biehl B.S."/>
            <person name="Mau B."/>
            <person name="Flynn S.M."/>
            <person name="Barras F."/>
            <person name="Lindeberg M."/>
            <person name="Birch P.R."/>
            <person name="Tsuyumu S."/>
            <person name="Shi X."/>
            <person name="Hibbing M."/>
            <person name="Yap M.N."/>
            <person name="Carpentier M."/>
            <person name="Dassa E."/>
            <person name="Umehara M."/>
            <person name="Kim J.F."/>
            <person name="Rusch M."/>
            <person name="Soni P."/>
            <person name="Mayhew G.F."/>
            <person name="Fouts D.E."/>
            <person name="Gill S.R."/>
            <person name="Blattner F.R."/>
            <person name="Keen N.T."/>
            <person name="Perna N.T."/>
        </authorList>
    </citation>
    <scope>NUCLEOTIDE SEQUENCE [LARGE SCALE GENOMIC DNA]</scope>
    <source>
        <strain>3937</strain>
    </source>
</reference>
<reference key="2">
    <citation type="journal article" date="2001" name="Mol. Microbiol.">
        <title>Glycine betaine loses its osmoprotective activity in a bspA strain of Erwinia chrysanthemi.</title>
        <authorList>
            <person name="Touze T."/>
            <person name="Gouesbet G."/>
            <person name="Boiangiu C."/>
            <person name="Jebbar M."/>
            <person name="Bonnassie S."/>
            <person name="Blanco C."/>
        </authorList>
    </citation>
    <scope>NUCLEOTIDE SEQUENCE [GENOMIC DNA] OF 82-349</scope>
    <source>
        <strain>3937</strain>
    </source>
</reference>
<organism>
    <name type="scientific">Dickeya dadantii (strain 3937)</name>
    <name type="common">Erwinia chrysanthemi (strain 3937)</name>
    <dbReference type="NCBI Taxonomy" id="198628"/>
    <lineage>
        <taxon>Bacteria</taxon>
        <taxon>Pseudomonadati</taxon>
        <taxon>Pseudomonadota</taxon>
        <taxon>Gammaproteobacteria</taxon>
        <taxon>Enterobacterales</taxon>
        <taxon>Pectobacteriaceae</taxon>
        <taxon>Dickeya</taxon>
    </lineage>
</organism>
<keyword id="KW-0963">Cytoplasm</keyword>
<keyword id="KW-0342">GTP-binding</keyword>
<keyword id="KW-0378">Hydrolase</keyword>
<keyword id="KW-0479">Metal-binding</keyword>
<keyword id="KW-0547">Nucleotide-binding</keyword>
<keyword id="KW-1185">Reference proteome</keyword>
<keyword id="KW-0690">Ribosome biogenesis</keyword>
<keyword id="KW-0694">RNA-binding</keyword>
<keyword id="KW-0699">rRNA-binding</keyword>
<keyword id="KW-0862">Zinc</keyword>
<accession>Q9EV05</accession>
<accession>E0SI23</accession>
<evidence type="ECO:0000255" key="1">
    <source>
        <dbReference type="HAMAP-Rule" id="MF_01820"/>
    </source>
</evidence>
<evidence type="ECO:0000255" key="2">
    <source>
        <dbReference type="PROSITE-ProRule" id="PRU01058"/>
    </source>
</evidence>
<evidence type="ECO:0000256" key="3">
    <source>
        <dbReference type="SAM" id="MobiDB-lite"/>
    </source>
</evidence>
<evidence type="ECO:0000305" key="4"/>